<keyword id="KW-1035">Host cytoplasm</keyword>
<keyword id="KW-1048">Host nucleus</keyword>
<keyword id="KW-0509">mRNA transport</keyword>
<keyword id="KW-1185">Reference proteome</keyword>
<keyword id="KW-0694">RNA-binding</keyword>
<keyword id="KW-0813">Transport</keyword>
<comment type="function">
    <text evidence="1">Rex escorts unspliced gag-pro-pol and singly spliced env mRNAs out of the nucleus of infected cells. These mRNAs carry a recognition sequence called Rex responsive element (RxRE or XRE) located at the 3' region of the long terminal repeat (LTR). This function is essential since most HTLV proteins are translated from unspliced or partially spliced pre-mRNAs that cannot exit the nucleus by the pathway used by fully processed cellular mRNAs (By similarity).</text>
</comment>
<comment type="subunit">
    <text evidence="1">Homomultimer.</text>
</comment>
<comment type="subcellular location">
    <subcellularLocation>
        <location evidence="1">Host nucleus</location>
        <location evidence="1">Host nucleolus</location>
    </subcellularLocation>
    <subcellularLocation>
        <location evidence="1">Host cytoplasm</location>
    </subcellularLocation>
    <text evidence="1">The presence of both nuclear import (NLS) and nuclear export (NES) signals leads to continuous shuttling between the nucleus and cytoplasm.</text>
</comment>
<comment type="domain">
    <text evidence="1">The RNA-binding motif binds to the RxRE, a complex secondary structure consisting of four stem loops and a long stretch of stem structure, present in incompletely spliced viral pre-mRNAs. This region also contains the NLS which mediates nuclear localization. These overlapping functions prevent Rex bound to RxRE from undesirable return to the nucleus. When Rex binds the RxRE, the NLS becomes masked while the NES remains accessible (By similarity).</text>
</comment>
<comment type="similarity">
    <text evidence="3">Belongs to the deltaretrovirus Rex protein family.</text>
</comment>
<comment type="sequence caution" evidence="3">
    <conflict type="erroneous gene model prediction">
        <sequence resource="EMBL-CDS" id="AAZ77660"/>
    </conflict>
</comment>
<organismHost>
    <name type="scientific">Homo sapiens</name>
    <name type="common">Human</name>
    <dbReference type="NCBI Taxonomy" id="9606"/>
</organismHost>
<gene>
    <name type="primary">rex</name>
</gene>
<accession>Q0R5R0</accession>
<protein>
    <recommendedName>
        <fullName>Protein Rex</fullName>
    </recommendedName>
    <alternativeName>
        <fullName>Rev homolog</fullName>
    </alternativeName>
    <alternativeName>
        <fullName>Rex-3</fullName>
    </alternativeName>
</protein>
<dbReference type="EMBL" id="DQ093792">
    <property type="protein sequence ID" value="AAZ77660.1"/>
    <property type="status" value="ALT_SEQ"/>
    <property type="molecule type" value="Genomic_DNA"/>
</dbReference>
<dbReference type="Proteomes" id="UP000008029">
    <property type="component" value="Genome"/>
</dbReference>
<dbReference type="GO" id="GO:0030430">
    <property type="term" value="C:host cell cytoplasm"/>
    <property type="evidence" value="ECO:0007669"/>
    <property type="project" value="UniProtKB-SubCell"/>
</dbReference>
<dbReference type="GO" id="GO:0044196">
    <property type="term" value="C:host cell nucleolus"/>
    <property type="evidence" value="ECO:0007669"/>
    <property type="project" value="UniProtKB-SubCell"/>
</dbReference>
<dbReference type="GO" id="GO:0003723">
    <property type="term" value="F:RNA binding"/>
    <property type="evidence" value="ECO:0007669"/>
    <property type="project" value="UniProtKB-KW"/>
</dbReference>
<dbReference type="GO" id="GO:0051028">
    <property type="term" value="P:mRNA transport"/>
    <property type="evidence" value="ECO:0007669"/>
    <property type="project" value="UniProtKB-KW"/>
</dbReference>
<sequence>MPKTRKQRSRRPKNQRPSTPWPISQVSDRAFSTGTLSTFSATVYRPIGAPFLGGFVPLGYTAMPYWPRAPNIRLPGTPSMDALSAQLYNTLSLDSPPSPPRELPAPSRFSPPQPLLRPPRFLHPSSTPLKNTPPSETIALNSPWESSCQPCPSPTLGSDPKTSTPCGEAPLCAFTSISSPPP</sequence>
<name>REX_HTL32</name>
<reference key="1">
    <citation type="journal article" date="2006" name="J. Virol.">
        <title>Ancient origin and molecular features of the novel human T-lymphotropic virus type 3 revealed by complete genome analysis.</title>
        <authorList>
            <person name="Switzer W.M."/>
            <person name="Qari S.H."/>
            <person name="Wolfe N.D."/>
            <person name="Burke D.S."/>
            <person name="Folks T.M."/>
            <person name="Heneine W."/>
        </authorList>
    </citation>
    <scope>NUCLEOTIDE SEQUENCE [GENOMIC DNA]</scope>
</reference>
<organism>
    <name type="scientific">Human T-cell leukemia virus 3 (strain 2026ND)</name>
    <name type="common">HTLV-3</name>
    <dbReference type="NCBI Taxonomy" id="402036"/>
    <lineage>
        <taxon>Viruses</taxon>
        <taxon>Riboviria</taxon>
        <taxon>Pararnavirae</taxon>
        <taxon>Artverviricota</taxon>
        <taxon>Revtraviricetes</taxon>
        <taxon>Ortervirales</taxon>
        <taxon>Retroviridae</taxon>
        <taxon>Orthoretrovirinae</taxon>
        <taxon>Deltaretrovirus</taxon>
        <taxon>Primate T-lymphotropic virus 3</taxon>
    </lineage>
</organism>
<proteinExistence type="inferred from homology"/>
<feature type="chain" id="PRO_0000259787" description="Protein Rex">
    <location>
        <begin position="1"/>
        <end position="182"/>
    </location>
</feature>
<feature type="region of interest" description="Disordered" evidence="2">
    <location>
        <begin position="1"/>
        <end position="26"/>
    </location>
</feature>
<feature type="region of interest" description="Homomultimerization" evidence="1">
    <location>
        <begin position="57"/>
        <end position="71"/>
    </location>
</feature>
<feature type="region of interest" description="Disordered" evidence="2">
    <location>
        <begin position="89"/>
        <end position="169"/>
    </location>
</feature>
<feature type="region of interest" description="Homomultimerization" evidence="1">
    <location>
        <begin position="124"/>
        <end position="132"/>
    </location>
</feature>
<feature type="short sequence motif" description="Nuclear localization signal, and RNA-binding (RxRE)" evidence="1">
    <location>
        <begin position="2"/>
        <end position="19"/>
    </location>
</feature>
<feature type="short sequence motif" description="Nuclear export signal" evidence="1">
    <location>
        <begin position="83"/>
        <end position="94"/>
    </location>
</feature>
<feature type="compositionally biased region" description="Basic residues" evidence="2">
    <location>
        <begin position="1"/>
        <end position="14"/>
    </location>
</feature>
<feature type="compositionally biased region" description="Polar residues" evidence="2">
    <location>
        <begin position="15"/>
        <end position="26"/>
    </location>
</feature>
<feature type="compositionally biased region" description="Pro residues" evidence="2">
    <location>
        <begin position="96"/>
        <end position="117"/>
    </location>
</feature>
<feature type="compositionally biased region" description="Polar residues" evidence="2">
    <location>
        <begin position="127"/>
        <end position="150"/>
    </location>
</feature>
<evidence type="ECO:0000250" key="1"/>
<evidence type="ECO:0000256" key="2">
    <source>
        <dbReference type="SAM" id="MobiDB-lite"/>
    </source>
</evidence>
<evidence type="ECO:0000305" key="3"/>